<keyword id="KW-1003">Cell membrane</keyword>
<keyword id="KW-0449">Lipoprotein</keyword>
<keyword id="KW-0472">Membrane</keyword>
<keyword id="KW-0564">Palmitate</keyword>
<keyword id="KW-1185">Reference proteome</keyword>
<keyword id="KW-0732">Signal</keyword>
<proteinExistence type="inferred from homology"/>
<comment type="subcellular location">
    <subcellularLocation>
        <location evidence="1">Cell membrane</location>
        <topology evidence="1">Lipid-anchor</topology>
    </subcellularLocation>
</comment>
<feature type="signal peptide" evidence="1">
    <location>
        <begin position="1"/>
        <end position="29"/>
    </location>
</feature>
<feature type="chain" id="PRO_0000014039" description="Uncharacterized lipoprotein MG348 homolog">
    <location>
        <begin position="30"/>
        <end position="305"/>
    </location>
</feature>
<feature type="region of interest" description="Disordered" evidence="2">
    <location>
        <begin position="234"/>
        <end position="265"/>
    </location>
</feature>
<feature type="compositionally biased region" description="Polar residues" evidence="2">
    <location>
        <begin position="237"/>
        <end position="258"/>
    </location>
</feature>
<feature type="lipid moiety-binding region" description="N-palmitoyl cysteine" evidence="1">
    <location>
        <position position="30"/>
    </location>
</feature>
<feature type="lipid moiety-binding region" description="S-diacylglycerol cysteine" evidence="1">
    <location>
        <position position="30"/>
    </location>
</feature>
<gene>
    <name type="ordered locus">MPN_523</name>
    <name type="ORF">G12_orf305</name>
    <name type="ORF">MP319</name>
</gene>
<reference key="1">
    <citation type="journal article" date="1996" name="Nucleic Acids Res.">
        <title>Complete sequence analysis of the genome of the bacterium Mycoplasma pneumoniae.</title>
        <authorList>
            <person name="Himmelreich R."/>
            <person name="Hilbert H."/>
            <person name="Plagens H."/>
            <person name="Pirkl E."/>
            <person name="Li B.-C."/>
            <person name="Herrmann R."/>
        </authorList>
    </citation>
    <scope>NUCLEOTIDE SEQUENCE [LARGE SCALE GENOMIC DNA]</scope>
    <source>
        <strain>ATCC 29342 / M129 / Subtype 1</strain>
    </source>
</reference>
<dbReference type="EMBL" id="U00089">
    <property type="protein sequence ID" value="AAB95967.1"/>
    <property type="molecule type" value="Genomic_DNA"/>
</dbReference>
<dbReference type="PIR" id="S73645">
    <property type="entry name" value="S73645"/>
</dbReference>
<dbReference type="RefSeq" id="NP_110211.1">
    <property type="nucleotide sequence ID" value="NC_000912.1"/>
</dbReference>
<dbReference type="RefSeq" id="WP_010874879.1">
    <property type="nucleotide sequence ID" value="NZ_OU342337.1"/>
</dbReference>
<dbReference type="EnsemblBacteria" id="AAB95967">
    <property type="protein sequence ID" value="AAB95967"/>
    <property type="gene ID" value="MPN_523"/>
</dbReference>
<dbReference type="KEGG" id="mpn:MPN_523"/>
<dbReference type="PATRIC" id="fig|272634.6.peg.580"/>
<dbReference type="HOGENOM" id="CLU_911612_0_0_14"/>
<dbReference type="OrthoDB" id="9764248at2"/>
<dbReference type="BioCyc" id="MPNE272634:G1GJ3-861-MONOMER"/>
<dbReference type="Proteomes" id="UP000000808">
    <property type="component" value="Chromosome"/>
</dbReference>
<dbReference type="GO" id="GO:0005886">
    <property type="term" value="C:plasma membrane"/>
    <property type="evidence" value="ECO:0007669"/>
    <property type="project" value="UniProtKB-SubCell"/>
</dbReference>
<dbReference type="InterPro" id="IPR049194">
    <property type="entry name" value="DUF6856"/>
</dbReference>
<dbReference type="Pfam" id="PF21637">
    <property type="entry name" value="DUF6856"/>
    <property type="match status" value="1"/>
</dbReference>
<dbReference type="PROSITE" id="PS51257">
    <property type="entry name" value="PROKAR_LIPOPROTEIN"/>
    <property type="match status" value="1"/>
</dbReference>
<sequence>MKKWFSSISKKKVSFSTLLLLGSGIVLSSCSNIDKPNVFRTLSQQSVENKVDYSKLPKENKTVRNLVFGTAEYNDGNYVLVVTTETDSSQINFLNGSNNQAVSTENWAGDLGTTVKQVQNRYSTYPKGVKFLIWNDIDPNPVKWNPFARYPVIASDNELAKQTDKDNSDKLRRNDESAIQYREIVTFIQTVYSGSVNNLINQSNVHAQTVGTDVTKAIVIAFRKNNLDQISAHFYNPDNSNGSNAPGSNQPNQDSGNNGSTTPAAPAAAAAKKSYSAGSFGVKRHAVQVSINFLNFLDSVYTPLN</sequence>
<organism>
    <name type="scientific">Mycoplasma pneumoniae (strain ATCC 29342 / M129 / Subtype 1)</name>
    <name type="common">Mycoplasmoides pneumoniae</name>
    <dbReference type="NCBI Taxonomy" id="272634"/>
    <lineage>
        <taxon>Bacteria</taxon>
        <taxon>Bacillati</taxon>
        <taxon>Mycoplasmatota</taxon>
        <taxon>Mycoplasmoidales</taxon>
        <taxon>Mycoplasmoidaceae</taxon>
        <taxon>Mycoplasmoides</taxon>
    </lineage>
</organism>
<evidence type="ECO:0000255" key="1">
    <source>
        <dbReference type="PROSITE-ProRule" id="PRU00303"/>
    </source>
</evidence>
<evidence type="ECO:0000256" key="2">
    <source>
        <dbReference type="SAM" id="MobiDB-lite"/>
    </source>
</evidence>
<accession>P75255</accession>
<name>Y523_MYCPN</name>
<protein>
    <recommendedName>
        <fullName>Uncharacterized lipoprotein MG348 homolog</fullName>
    </recommendedName>
</protein>